<name>ODBA_PSEPU</name>
<proteinExistence type="evidence at protein level"/>
<gene>
    <name type="primary">bkdA1</name>
</gene>
<keyword id="KW-0002">3D-structure</keyword>
<keyword id="KW-0903">Direct protein sequencing</keyword>
<keyword id="KW-0560">Oxidoreductase</keyword>
<keyword id="KW-0786">Thiamine pyrophosphate</keyword>
<feature type="chain" id="PRO_0000162249" description="2-oxoisovalerate dehydrogenase subunit alpha">
    <location>
        <begin position="1"/>
        <end position="410"/>
    </location>
</feature>
<feature type="helix" evidence="2">
    <location>
        <begin position="24"/>
        <end position="26"/>
    </location>
</feature>
<feature type="helix" evidence="2">
    <location>
        <begin position="44"/>
        <end position="47"/>
    </location>
</feature>
<feature type="helix" evidence="2">
    <location>
        <begin position="48"/>
        <end position="51"/>
    </location>
</feature>
<feature type="helix" evidence="2">
    <location>
        <begin position="67"/>
        <end position="69"/>
    </location>
</feature>
<feature type="helix" evidence="2">
    <location>
        <begin position="74"/>
        <end position="99"/>
    </location>
</feature>
<feature type="strand" evidence="2">
    <location>
        <begin position="102"/>
        <end position="104"/>
    </location>
</feature>
<feature type="turn" evidence="2">
    <location>
        <begin position="110"/>
        <end position="112"/>
    </location>
</feature>
<feature type="helix" evidence="2">
    <location>
        <begin position="113"/>
        <end position="122"/>
    </location>
</feature>
<feature type="strand" evidence="2">
    <location>
        <begin position="127"/>
        <end position="130"/>
    </location>
</feature>
<feature type="helix" evidence="2">
    <location>
        <begin position="136"/>
        <end position="141"/>
    </location>
</feature>
<feature type="helix" evidence="2">
    <location>
        <begin position="146"/>
        <end position="154"/>
    </location>
</feature>
<feature type="turn" evidence="2">
    <location>
        <begin position="160"/>
        <end position="163"/>
    </location>
</feature>
<feature type="helix" evidence="2">
    <location>
        <begin position="173"/>
        <end position="175"/>
    </location>
</feature>
<feature type="strand" evidence="2">
    <location>
        <begin position="182"/>
        <end position="185"/>
    </location>
</feature>
<feature type="helix" evidence="2">
    <location>
        <begin position="186"/>
        <end position="200"/>
    </location>
</feature>
<feature type="strand" evidence="2">
    <location>
        <begin position="207"/>
        <end position="212"/>
    </location>
</feature>
<feature type="helix" evidence="2">
    <location>
        <begin position="214"/>
        <end position="217"/>
    </location>
</feature>
<feature type="helix" evidence="2">
    <location>
        <begin position="219"/>
        <end position="231"/>
    </location>
</feature>
<feature type="strand" evidence="2">
    <location>
        <begin position="235"/>
        <end position="241"/>
    </location>
</feature>
<feature type="strand" evidence="2">
    <location>
        <begin position="243"/>
        <end position="245"/>
    </location>
</feature>
<feature type="helix" evidence="2">
    <location>
        <begin position="250"/>
        <end position="253"/>
    </location>
</feature>
<feature type="turn" evidence="2">
    <location>
        <begin position="254"/>
        <end position="257"/>
    </location>
</feature>
<feature type="helix" evidence="2">
    <location>
        <begin position="262"/>
        <end position="266"/>
    </location>
</feature>
<feature type="strand" evidence="2">
    <location>
        <begin position="270"/>
        <end position="275"/>
    </location>
</feature>
<feature type="helix" evidence="2">
    <location>
        <begin position="279"/>
        <end position="294"/>
    </location>
</feature>
<feature type="strand" evidence="2">
    <location>
        <begin position="300"/>
        <end position="305"/>
    </location>
</feature>
<feature type="helix" evidence="2">
    <location>
        <begin position="318"/>
        <end position="320"/>
    </location>
</feature>
<feature type="helix" evidence="2">
    <location>
        <begin position="326"/>
        <end position="329"/>
    </location>
</feature>
<feature type="helix" evidence="2">
    <location>
        <begin position="335"/>
        <end position="345"/>
    </location>
</feature>
<feature type="helix" evidence="2">
    <location>
        <begin position="351"/>
        <end position="373"/>
    </location>
</feature>
<feature type="strand" evidence="2">
    <location>
        <begin position="378"/>
        <end position="380"/>
    </location>
</feature>
<feature type="helix" evidence="2">
    <location>
        <begin position="388"/>
        <end position="390"/>
    </location>
</feature>
<feature type="strand" evidence="2">
    <location>
        <begin position="391"/>
        <end position="396"/>
    </location>
</feature>
<feature type="helix" evidence="2">
    <location>
        <begin position="399"/>
        <end position="406"/>
    </location>
</feature>
<reference key="1">
    <citation type="journal article" date="1988" name="Eur. J. Biochem.">
        <title>Similarity of the E1 subunits of branched-chain-oxoacid dehydrogenase from Pseudomonas putida to the corresponding subunits of mammalian branched-chain-oxoacid and pyruvate dehydrogenases.</title>
        <authorList>
            <person name="Burns G."/>
            <person name="Brown T."/>
            <person name="Hatter K."/>
            <person name="Idriss J."/>
            <person name="Sokatch J.R."/>
        </authorList>
    </citation>
    <scope>NUCLEOTIDE SEQUENCE [GENOMIC DNA]</scope>
    <source>
        <strain>G2</strain>
    </source>
</reference>
<reference key="2">
    <citation type="journal article" date="1990" name="J. Bacteriol.">
        <title>Transcriptional analysis of the promoter region of the Pseudomonas putida branched-chain keto acid dehydrogenase operon.</title>
        <authorList>
            <person name="Madhusudhan K.T."/>
            <person name="Huang G."/>
            <person name="Burns G."/>
            <person name="Sokatch J.R."/>
        </authorList>
    </citation>
    <scope>NUCLEOTIDE SEQUENCE [GENOMIC DNA] OF 1-17</scope>
    <source>
        <strain>G2</strain>
    </source>
</reference>
<reference key="3">
    <citation type="journal article" date="1995" name="Eur. J. Biochem.">
        <title>Purification of active E1 alpha 2 beta 2 of Pseudomonas putida branched-chain-oxoacid dehydrogenase.</title>
        <authorList>
            <person name="Hester K."/>
            <person name="Luo J."/>
            <person name="Burns G."/>
            <person name="Braswell E.H."/>
            <person name="Sokatch J.R."/>
        </authorList>
    </citation>
    <scope>PROTEIN SEQUENCE OF 1-13</scope>
</reference>
<reference key="4">
    <citation type="journal article" date="1999" name="Nat. Struct. Biol.">
        <title>Crystal structure of 2-oxoisovalerate and dehydrogenase and the architecture of 2-oxo acid dehydrogenase multienzyme complexes.</title>
        <authorList>
            <person name="Aevarsson A."/>
            <person name="Seger K."/>
            <person name="Turley S."/>
            <person name="Sokatch J.R."/>
            <person name="Hol W.G.J."/>
        </authorList>
    </citation>
    <scope>X-RAY CRYSTALLOGRAPHY (2.4 ANGSTROMS)</scope>
</reference>
<organism>
    <name type="scientific">Pseudomonas putida</name>
    <name type="common">Arthrobacter siderocapsulatus</name>
    <dbReference type="NCBI Taxonomy" id="303"/>
    <lineage>
        <taxon>Bacteria</taxon>
        <taxon>Pseudomonadati</taxon>
        <taxon>Pseudomonadota</taxon>
        <taxon>Gammaproteobacteria</taxon>
        <taxon>Pseudomonadales</taxon>
        <taxon>Pseudomonadaceae</taxon>
        <taxon>Pseudomonas</taxon>
    </lineage>
</organism>
<accession>P09060</accession>
<dbReference type="EC" id="1.2.4.4"/>
<dbReference type="EMBL" id="M57613">
    <property type="protein sequence ID" value="AAA65614.1"/>
    <property type="molecule type" value="Genomic_DNA"/>
</dbReference>
<dbReference type="PIR" id="S01317">
    <property type="entry name" value="DEPSXA"/>
</dbReference>
<dbReference type="RefSeq" id="WP_019099583.1">
    <property type="nucleotide sequence ID" value="NZ_JARJLO010000441.1"/>
</dbReference>
<dbReference type="PDB" id="1QS0">
    <property type="method" value="X-ray"/>
    <property type="resolution" value="2.40 A"/>
    <property type="chains" value="A=2-408"/>
</dbReference>
<dbReference type="PDB" id="2BP7">
    <property type="method" value="X-ray"/>
    <property type="resolution" value="2.90 A"/>
    <property type="chains" value="A/C/E/G=1-410"/>
</dbReference>
<dbReference type="PDBsum" id="1QS0"/>
<dbReference type="PDBsum" id="2BP7"/>
<dbReference type="SMR" id="P09060"/>
<dbReference type="DIP" id="DIP-6208N"/>
<dbReference type="IntAct" id="P09060">
    <property type="interactions" value="1"/>
</dbReference>
<dbReference type="eggNOG" id="COG1071">
    <property type="taxonomic scope" value="Bacteria"/>
</dbReference>
<dbReference type="EvolutionaryTrace" id="P09060"/>
<dbReference type="GO" id="GO:0003863">
    <property type="term" value="F:3-methyl-2-oxobutanoate dehydrogenase (2-methylpropanoyl-transferring) activity"/>
    <property type="evidence" value="ECO:0007669"/>
    <property type="project" value="UniProtKB-EC"/>
</dbReference>
<dbReference type="GO" id="GO:0009083">
    <property type="term" value="P:branched-chain amino acid catabolic process"/>
    <property type="evidence" value="ECO:0007669"/>
    <property type="project" value="TreeGrafter"/>
</dbReference>
<dbReference type="CDD" id="cd02000">
    <property type="entry name" value="TPP_E1_PDC_ADC_BCADC"/>
    <property type="match status" value="1"/>
</dbReference>
<dbReference type="Gene3D" id="3.40.50.970">
    <property type="match status" value="1"/>
</dbReference>
<dbReference type="InterPro" id="IPR050771">
    <property type="entry name" value="Alpha-ketoacid_DH_E1_comp"/>
</dbReference>
<dbReference type="InterPro" id="IPR001017">
    <property type="entry name" value="DH_E1"/>
</dbReference>
<dbReference type="InterPro" id="IPR022593">
    <property type="entry name" value="Oxoisoval_DH_suAlpha_N_dom"/>
</dbReference>
<dbReference type="InterPro" id="IPR029061">
    <property type="entry name" value="THDP-binding"/>
</dbReference>
<dbReference type="PANTHER" id="PTHR43380">
    <property type="entry name" value="2-OXOISOVALERATE DEHYDROGENASE SUBUNIT ALPHA, MITOCHONDRIAL"/>
    <property type="match status" value="1"/>
</dbReference>
<dbReference type="PANTHER" id="PTHR43380:SF1">
    <property type="entry name" value="2-OXOISOVALERATE DEHYDROGENASE SUBUNIT ALPHA, MITOCHONDRIAL"/>
    <property type="match status" value="1"/>
</dbReference>
<dbReference type="Pfam" id="PF00676">
    <property type="entry name" value="E1_dh"/>
    <property type="match status" value="1"/>
</dbReference>
<dbReference type="Pfam" id="PF12573">
    <property type="entry name" value="OxoDH_E1alpha_N"/>
    <property type="match status" value="1"/>
</dbReference>
<dbReference type="SUPFAM" id="SSF52518">
    <property type="entry name" value="Thiamin diphosphate-binding fold (THDP-binding)"/>
    <property type="match status" value="1"/>
</dbReference>
<comment type="function">
    <text>The branched-chain alpha-keto dehydrogenase complex catalyzes the overall conversion of alpha-keto acids to acyl-CoA and CO(2). It contains multiple copies of three enzymatic components: branched-chain alpha-keto acid decarboxylase (E1), lipoamide acyltransferase (E2) and lipoamide dehydrogenase (E3).</text>
</comment>
<comment type="catalytic activity">
    <reaction>
        <text>N(6)-[(R)-lipoyl]-L-lysyl-[protein] + 3-methyl-2-oxobutanoate + H(+) = N(6)-[(R)-S(8)-2-methylpropanoyldihydrolipoyl]-L-lysyl-[protein] + CO2</text>
        <dbReference type="Rhea" id="RHEA:13457"/>
        <dbReference type="Rhea" id="RHEA-COMP:10474"/>
        <dbReference type="Rhea" id="RHEA-COMP:10497"/>
        <dbReference type="ChEBI" id="CHEBI:11851"/>
        <dbReference type="ChEBI" id="CHEBI:15378"/>
        <dbReference type="ChEBI" id="CHEBI:16526"/>
        <dbReference type="ChEBI" id="CHEBI:83099"/>
        <dbReference type="ChEBI" id="CHEBI:83142"/>
        <dbReference type="EC" id="1.2.4.4"/>
    </reaction>
</comment>
<comment type="cofactor">
    <cofactor>
        <name>thiamine diphosphate</name>
        <dbReference type="ChEBI" id="CHEBI:58937"/>
    </cofactor>
</comment>
<comment type="subunit">
    <text>Heterodimer of an alpha and a beta chain.</text>
</comment>
<comment type="similarity">
    <text evidence="1">Belongs to the BCKDHA family.</text>
</comment>
<protein>
    <recommendedName>
        <fullName>2-oxoisovalerate dehydrogenase subunit alpha</fullName>
        <ecNumber>1.2.4.4</ecNumber>
    </recommendedName>
    <alternativeName>
        <fullName>Branched-chain alpha-keto acid dehydrogenase E1 component alpha chain</fullName>
        <shortName>BCKDH E1-alpha</shortName>
    </alternativeName>
</protein>
<evidence type="ECO:0000305" key="1"/>
<evidence type="ECO:0007829" key="2">
    <source>
        <dbReference type="PDB" id="1QS0"/>
    </source>
</evidence>
<sequence length="410" mass="45268">MNEYAPLRLHVPEPTGRPGCQTDFSYLRLNDAGQARKPPVDVDAADTADLSYSLVRVLDEQGDAQGPWAEDIDPQILRQGMRAMLKTRIFDSRMVVAQRQKKMSFYMQSLGEEAIGSGQALALNRTDMCFPTYRQQSILMARDVSLVEMICQLLSNERDPLKGRQLPIMYSVREAGFFTISGNLATQFVQAVGWAMASAIKGDTKIASAWIGDGATAESDFHTALTFAHVYRAPVILNVVNNQWAISTFQAIAGGESTTFAGRGVGCGIASLRVDGNDFVAVYAASRWAAERARRGLGPSLIEWVTYRAGPHSTSDDPSKYRPADDWSHFPLGDPIARLKQHLIKIGHWSEEEHQATTAEFEAAVIAAQKEAEQYGTLANGHIPSAASMFEDVYKEMPDHLRRQRQELGV</sequence>